<name>RAP1B_MACFA</name>
<keyword id="KW-0013">ADP-ribosylation</keyword>
<keyword id="KW-0965">Cell junction</keyword>
<keyword id="KW-1003">Cell membrane</keyword>
<keyword id="KW-0963">Cytoplasm</keyword>
<keyword id="KW-0342">GTP-binding</keyword>
<keyword id="KW-0378">Hydrolase</keyword>
<keyword id="KW-0449">Lipoprotein</keyword>
<keyword id="KW-0472">Membrane</keyword>
<keyword id="KW-0488">Methylation</keyword>
<keyword id="KW-0547">Nucleotide-binding</keyword>
<keyword id="KW-0597">Phosphoprotein</keyword>
<keyword id="KW-0636">Prenylation</keyword>
<keyword id="KW-1185">Reference proteome</keyword>
<dbReference type="EC" id="3.6.5.2" evidence="2"/>
<dbReference type="EMBL" id="AB168162">
    <property type="protein sequence ID" value="BAE00287.1"/>
    <property type="molecule type" value="mRNA"/>
</dbReference>
<dbReference type="RefSeq" id="NP_001272334.1">
    <property type="nucleotide sequence ID" value="NM_001285405.1"/>
</dbReference>
<dbReference type="RefSeq" id="XP_005571546.1">
    <property type="nucleotide sequence ID" value="XM_005571489.4"/>
</dbReference>
<dbReference type="RefSeq" id="XP_045221513.1">
    <property type="nucleotide sequence ID" value="XM_045365578.2"/>
</dbReference>
<dbReference type="RefSeq" id="XP_045221514.1">
    <property type="nucleotide sequence ID" value="XM_045365579.2"/>
</dbReference>
<dbReference type="RefSeq" id="XP_045221515.1">
    <property type="nucleotide sequence ID" value="XM_045365580.2"/>
</dbReference>
<dbReference type="RefSeq" id="XP_045221516.1">
    <property type="nucleotide sequence ID" value="XM_045365581.2"/>
</dbReference>
<dbReference type="RefSeq" id="XP_045221517.1">
    <property type="nucleotide sequence ID" value="XM_045365582.2"/>
</dbReference>
<dbReference type="RefSeq" id="XP_045221518.1">
    <property type="nucleotide sequence ID" value="XM_045365583.2"/>
</dbReference>
<dbReference type="RefSeq" id="XP_045221519.1">
    <property type="nucleotide sequence ID" value="XM_045365584.2"/>
</dbReference>
<dbReference type="RefSeq" id="XP_045221520.1">
    <property type="nucleotide sequence ID" value="XM_045365585.2"/>
</dbReference>
<dbReference type="RefSeq" id="XP_065380616.1">
    <property type="nucleotide sequence ID" value="XM_065524544.1"/>
</dbReference>
<dbReference type="RefSeq" id="XP_065380617.1">
    <property type="nucleotide sequence ID" value="XM_065524545.1"/>
</dbReference>
<dbReference type="RefSeq" id="XP_065380618.1">
    <property type="nucleotide sequence ID" value="XM_065524546.1"/>
</dbReference>
<dbReference type="RefSeq" id="XP_065380619.1">
    <property type="nucleotide sequence ID" value="XM_065524547.1"/>
</dbReference>
<dbReference type="RefSeq" id="XP_065380620.1">
    <property type="nucleotide sequence ID" value="XM_065524548.1"/>
</dbReference>
<dbReference type="SMR" id="Q4R9D4"/>
<dbReference type="STRING" id="9541.ENSMFAP00000039916"/>
<dbReference type="Ensembl" id="ENSMFAT00000095751.1">
    <property type="protein sequence ID" value="ENSMFAP00000054168.1"/>
    <property type="gene ID" value="ENSMFAG00000046085.2"/>
</dbReference>
<dbReference type="GeneID" id="102133022"/>
<dbReference type="CTD" id="5908"/>
<dbReference type="VEuPathDB" id="HostDB:ENSMFAG00000046085"/>
<dbReference type="eggNOG" id="KOG0395">
    <property type="taxonomic scope" value="Eukaryota"/>
</dbReference>
<dbReference type="GeneTree" id="ENSGT00940000154429"/>
<dbReference type="OMA" id="MPLREFK"/>
<dbReference type="Proteomes" id="UP000233100">
    <property type="component" value="Chromosome 11"/>
</dbReference>
<dbReference type="Bgee" id="ENSMFAG00000046085">
    <property type="expression patterns" value="Expressed in bone marrow and 13 other cell types or tissues"/>
</dbReference>
<dbReference type="GO" id="GO:0005911">
    <property type="term" value="C:cell-cell junction"/>
    <property type="evidence" value="ECO:0000250"/>
    <property type="project" value="UniProtKB"/>
</dbReference>
<dbReference type="GO" id="GO:0005829">
    <property type="term" value="C:cytosol"/>
    <property type="evidence" value="ECO:0007669"/>
    <property type="project" value="UniProtKB-SubCell"/>
</dbReference>
<dbReference type="GO" id="GO:0005886">
    <property type="term" value="C:plasma membrane"/>
    <property type="evidence" value="ECO:0007669"/>
    <property type="project" value="UniProtKB-SubCell"/>
</dbReference>
<dbReference type="GO" id="GO:0003925">
    <property type="term" value="F:G protein activity"/>
    <property type="evidence" value="ECO:0007669"/>
    <property type="project" value="UniProtKB-EC"/>
</dbReference>
<dbReference type="GO" id="GO:0019003">
    <property type="term" value="F:GDP binding"/>
    <property type="evidence" value="ECO:0000250"/>
    <property type="project" value="UniProtKB"/>
</dbReference>
<dbReference type="GO" id="GO:0005525">
    <property type="term" value="F:GTP binding"/>
    <property type="evidence" value="ECO:0000250"/>
    <property type="project" value="UniProtKB"/>
</dbReference>
<dbReference type="GO" id="GO:0003924">
    <property type="term" value="F:GTPase activity"/>
    <property type="evidence" value="ECO:0000250"/>
    <property type="project" value="UniProtKB"/>
</dbReference>
<dbReference type="GO" id="GO:0071320">
    <property type="term" value="P:cellular response to cAMP"/>
    <property type="evidence" value="ECO:0000250"/>
    <property type="project" value="UniProtKB"/>
</dbReference>
<dbReference type="GO" id="GO:0061028">
    <property type="term" value="P:establishment of endothelial barrier"/>
    <property type="evidence" value="ECO:0000250"/>
    <property type="project" value="UniProtKB"/>
</dbReference>
<dbReference type="GO" id="GO:0032486">
    <property type="term" value="P:Rap protein signal transduction"/>
    <property type="evidence" value="ECO:0000250"/>
    <property type="project" value="UniProtKB"/>
</dbReference>
<dbReference type="GO" id="GO:1901888">
    <property type="term" value="P:regulation of cell junction assembly"/>
    <property type="evidence" value="ECO:0000250"/>
    <property type="project" value="UniProtKB"/>
</dbReference>
<dbReference type="GO" id="GO:2000114">
    <property type="term" value="P:regulation of establishment of cell polarity"/>
    <property type="evidence" value="ECO:0000250"/>
    <property type="project" value="UniProtKB"/>
</dbReference>
<dbReference type="CDD" id="cd04175">
    <property type="entry name" value="Rap1"/>
    <property type="match status" value="1"/>
</dbReference>
<dbReference type="FunFam" id="3.40.50.300:FF:000182">
    <property type="entry name" value="ras-related protein Rap-1b"/>
    <property type="match status" value="1"/>
</dbReference>
<dbReference type="Gene3D" id="3.40.50.300">
    <property type="entry name" value="P-loop containing nucleotide triphosphate hydrolases"/>
    <property type="match status" value="1"/>
</dbReference>
<dbReference type="InterPro" id="IPR027417">
    <property type="entry name" value="P-loop_NTPase"/>
</dbReference>
<dbReference type="InterPro" id="IPR038851">
    <property type="entry name" value="Rap1"/>
</dbReference>
<dbReference type="InterPro" id="IPR005225">
    <property type="entry name" value="Small_GTP-bd"/>
</dbReference>
<dbReference type="InterPro" id="IPR001806">
    <property type="entry name" value="Small_GTPase"/>
</dbReference>
<dbReference type="InterPro" id="IPR020849">
    <property type="entry name" value="Small_GTPase_Ras-type"/>
</dbReference>
<dbReference type="NCBIfam" id="TIGR00231">
    <property type="entry name" value="small_GTP"/>
    <property type="match status" value="1"/>
</dbReference>
<dbReference type="PANTHER" id="PTHR24070">
    <property type="entry name" value="RAS, DI-RAS, AND RHEB FAMILY MEMBERS OF SMALL GTPASE SUPERFAMILY"/>
    <property type="match status" value="1"/>
</dbReference>
<dbReference type="Pfam" id="PF00071">
    <property type="entry name" value="Ras"/>
    <property type="match status" value="1"/>
</dbReference>
<dbReference type="PRINTS" id="PR00449">
    <property type="entry name" value="RASTRNSFRMNG"/>
</dbReference>
<dbReference type="SMART" id="SM00175">
    <property type="entry name" value="RAB"/>
    <property type="match status" value="1"/>
</dbReference>
<dbReference type="SMART" id="SM00176">
    <property type="entry name" value="RAN"/>
    <property type="match status" value="1"/>
</dbReference>
<dbReference type="SMART" id="SM00173">
    <property type="entry name" value="RAS"/>
    <property type="match status" value="1"/>
</dbReference>
<dbReference type="SMART" id="SM00174">
    <property type="entry name" value="RHO"/>
    <property type="match status" value="1"/>
</dbReference>
<dbReference type="SUPFAM" id="SSF52540">
    <property type="entry name" value="P-loop containing nucleoside triphosphate hydrolases"/>
    <property type="match status" value="1"/>
</dbReference>
<dbReference type="PROSITE" id="PS51421">
    <property type="entry name" value="RAS"/>
    <property type="match status" value="1"/>
</dbReference>
<protein>
    <recommendedName>
        <fullName>Ras-related protein Rap-1b</fullName>
        <ecNumber evidence="2">3.6.5.2</ecNumber>
    </recommendedName>
</protein>
<organism>
    <name type="scientific">Macaca fascicularis</name>
    <name type="common">Crab-eating macaque</name>
    <name type="synonym">Cynomolgus monkey</name>
    <dbReference type="NCBI Taxonomy" id="9541"/>
    <lineage>
        <taxon>Eukaryota</taxon>
        <taxon>Metazoa</taxon>
        <taxon>Chordata</taxon>
        <taxon>Craniata</taxon>
        <taxon>Vertebrata</taxon>
        <taxon>Euteleostomi</taxon>
        <taxon>Mammalia</taxon>
        <taxon>Eutheria</taxon>
        <taxon>Euarchontoglires</taxon>
        <taxon>Primates</taxon>
        <taxon>Haplorrhini</taxon>
        <taxon>Catarrhini</taxon>
        <taxon>Cercopithecidae</taxon>
        <taxon>Cercopithecinae</taxon>
        <taxon>Macaca</taxon>
    </lineage>
</organism>
<proteinExistence type="evidence at transcript level"/>
<accession>Q4R9D4</accession>
<sequence length="184" mass="20825">MREYKLVVLGSGGVGKSALTVQFVQGIFVEKYDPTIEDSYRKQVEVDAQQCMLEILDTAGTEQFTAMRDLYMKNGQGFALVYSITAQSTFNDLQDLREQILRVKDTDDVPMILVGNKCDLEDERVVGKEQGQNLARQWNNCAFLESSAKSKINVNEIFYDLVRQINRKTPVPGKARKKSSCQLL</sequence>
<evidence type="ECO:0000250" key="1"/>
<evidence type="ECO:0000250" key="2">
    <source>
        <dbReference type="UniProtKB" id="P61224"/>
    </source>
</evidence>
<evidence type="ECO:0000305" key="3"/>
<gene>
    <name type="primary">RAP1B</name>
    <name type="ORF">QtsA-10260</name>
</gene>
<reference key="1">
    <citation type="submission" date="2005-06" db="EMBL/GenBank/DDBJ databases">
        <title>DNA sequences of macaque genes expressed in brain or testis and its evolutionary implications.</title>
        <authorList>
            <consortium name="International consortium for macaque cDNA sequencing and analysis"/>
        </authorList>
    </citation>
    <scope>NUCLEOTIDE SEQUENCE [LARGE SCALE MRNA]</scope>
    <source>
        <tissue>Testis</tissue>
    </source>
</reference>
<comment type="function">
    <text evidence="2">GTP-binding protein that possesses intrinsic GTPase activity. Contributes to the polarizing activity of KRIT1 and CDH5 in the establishment and maintenance of correct endothelial cell polarity and vascular lumen. Required for the localization of phosphorylated PRKCZ, PARD3 and TIAM1 to the cell junction. Plays a role in the establishment of basal endothelial barrier function (By similarity).</text>
</comment>
<comment type="catalytic activity">
    <reaction evidence="2">
        <text>GTP + H2O = GDP + phosphate + H(+)</text>
        <dbReference type="Rhea" id="RHEA:19669"/>
        <dbReference type="ChEBI" id="CHEBI:15377"/>
        <dbReference type="ChEBI" id="CHEBI:15378"/>
        <dbReference type="ChEBI" id="CHEBI:37565"/>
        <dbReference type="ChEBI" id="CHEBI:43474"/>
        <dbReference type="ChEBI" id="CHEBI:58189"/>
        <dbReference type="EC" id="3.6.5.2"/>
    </reaction>
</comment>
<comment type="activity regulation">
    <text evidence="2">Activated by guanine nucleotide-exchange factor (GEF) EPAC2 in a cAMP-dependent manner.</text>
</comment>
<comment type="subunit">
    <text evidence="2">Heterodimer with RAP1GAP (By similarity). Interacts with EPAC2 (By similarity). Interacts with SGSM1 (By similarity). Interacts with SGSM2 (By similarity). Interacts with SGSM3 (By similarity). Interacts with KRIT1 (By similarity). Interacts with RAP1GDS1 (By similarity).</text>
</comment>
<comment type="subcellular location">
    <subcellularLocation>
        <location evidence="2">Cell membrane</location>
    </subcellularLocation>
    <subcellularLocation>
        <location evidence="2">Cytoplasm</location>
        <location evidence="2">Cytosol</location>
    </subcellularLocation>
    <subcellularLocation>
        <location evidence="2">Cell junction</location>
    </subcellularLocation>
    <text evidence="2">May shuttle between plasma membrane and cytosol (By similarity). Presence of KRIT1 and CDH5 is required for its localization to the cell junction (By similarity).</text>
</comment>
<comment type="similarity">
    <text evidence="3">Belongs to the small GTPase superfamily. Ras family.</text>
</comment>
<feature type="chain" id="PRO_0000260751" description="Ras-related protein Rap-1b">
    <location>
        <begin position="1"/>
        <end position="181"/>
    </location>
</feature>
<feature type="propeptide" id="PRO_0000260752" description="Removed in mature form" evidence="1">
    <location>
        <begin position="182"/>
        <end position="184"/>
    </location>
</feature>
<feature type="region of interest" description="Interaction with KRIT1" evidence="2">
    <location>
        <begin position="25"/>
        <end position="67"/>
    </location>
</feature>
<feature type="short sequence motif" description="Effector region" evidence="3">
    <location>
        <begin position="32"/>
        <end position="40"/>
    </location>
</feature>
<feature type="binding site" evidence="2">
    <location>
        <begin position="10"/>
        <end position="18"/>
    </location>
    <ligand>
        <name>GTP</name>
        <dbReference type="ChEBI" id="CHEBI:37565"/>
    </ligand>
</feature>
<feature type="binding site" evidence="2">
    <location>
        <begin position="57"/>
        <end position="61"/>
    </location>
    <ligand>
        <name>GTP</name>
        <dbReference type="ChEBI" id="CHEBI:37565"/>
    </ligand>
</feature>
<feature type="binding site" evidence="2">
    <location>
        <begin position="116"/>
        <end position="119"/>
    </location>
    <ligand>
        <name>GTP</name>
        <dbReference type="ChEBI" id="CHEBI:37565"/>
    </ligand>
</feature>
<feature type="binding site" evidence="2">
    <location>
        <begin position="147"/>
        <end position="149"/>
    </location>
    <ligand>
        <name>GTP</name>
        <dbReference type="ChEBI" id="CHEBI:37565"/>
    </ligand>
</feature>
<feature type="modified residue" description="ADP-ribosylserine; by botulinum toxin" evidence="1">
    <location>
        <position position="39"/>
    </location>
</feature>
<feature type="modified residue" description="Phosphoserine; by PKA" evidence="2">
    <location>
        <position position="179"/>
    </location>
</feature>
<feature type="modified residue" description="Cysteine methyl ester" evidence="2">
    <location>
        <position position="181"/>
    </location>
</feature>
<feature type="lipid moiety-binding region" description="S-geranylgeranyl cysteine" evidence="2">
    <location>
        <position position="181"/>
    </location>
</feature>